<reference key="1">
    <citation type="journal article" date="2008" name="J. Bacteriol.">
        <title>Genome sequence of Lactobacillus helveticus: an organism distinguished by selective gene loss and IS element expansion.</title>
        <authorList>
            <person name="Callanan M."/>
            <person name="Kaleta P."/>
            <person name="O'Callaghan J."/>
            <person name="O'Sullivan O."/>
            <person name="Jordan K."/>
            <person name="McAuliffe O."/>
            <person name="Sangrador-Vegas A."/>
            <person name="Slattery L."/>
            <person name="Fitzgerald G.F."/>
            <person name="Beresford T."/>
            <person name="Ross R.P."/>
        </authorList>
    </citation>
    <scope>NUCLEOTIDE SEQUENCE [LARGE SCALE GENOMIC DNA]</scope>
    <source>
        <strain>DPC 4571</strain>
    </source>
</reference>
<protein>
    <recommendedName>
        <fullName evidence="1">Trigger factor</fullName>
        <shortName evidence="1">TF</shortName>
        <ecNumber evidence="1">5.2.1.8</ecNumber>
    </recommendedName>
    <alternativeName>
        <fullName evidence="1">PPIase</fullName>
    </alternativeName>
</protein>
<comment type="function">
    <text evidence="1">Involved in protein export. Acts as a chaperone by maintaining the newly synthesized protein in an open conformation. Functions as a peptidyl-prolyl cis-trans isomerase.</text>
</comment>
<comment type="catalytic activity">
    <reaction evidence="1">
        <text>[protein]-peptidylproline (omega=180) = [protein]-peptidylproline (omega=0)</text>
        <dbReference type="Rhea" id="RHEA:16237"/>
        <dbReference type="Rhea" id="RHEA-COMP:10747"/>
        <dbReference type="Rhea" id="RHEA-COMP:10748"/>
        <dbReference type="ChEBI" id="CHEBI:83833"/>
        <dbReference type="ChEBI" id="CHEBI:83834"/>
        <dbReference type="EC" id="5.2.1.8"/>
    </reaction>
</comment>
<comment type="subcellular location">
    <subcellularLocation>
        <location>Cytoplasm</location>
    </subcellularLocation>
    <text evidence="1">About half TF is bound to the ribosome near the polypeptide exit tunnel while the other half is free in the cytoplasm.</text>
</comment>
<comment type="domain">
    <text evidence="1">Consists of 3 domains; the N-terminus binds the ribosome, the middle domain has PPIase activity, while the C-terminus has intrinsic chaperone activity on its own.</text>
</comment>
<comment type="similarity">
    <text evidence="1">Belongs to the FKBP-type PPIase family. Tig subfamily.</text>
</comment>
<dbReference type="EC" id="5.2.1.8" evidence="1"/>
<dbReference type="EMBL" id="CP000517">
    <property type="protein sequence ID" value="ABX27011.1"/>
    <property type="molecule type" value="Genomic_DNA"/>
</dbReference>
<dbReference type="RefSeq" id="WP_012211724.1">
    <property type="nucleotide sequence ID" value="NC_010080.1"/>
</dbReference>
<dbReference type="SMR" id="A8YUS3"/>
<dbReference type="KEGG" id="lhe:lhv_0896"/>
<dbReference type="eggNOG" id="COG0544">
    <property type="taxonomic scope" value="Bacteria"/>
</dbReference>
<dbReference type="HOGENOM" id="CLU_033058_3_2_9"/>
<dbReference type="Proteomes" id="UP000000790">
    <property type="component" value="Chromosome"/>
</dbReference>
<dbReference type="GO" id="GO:0005737">
    <property type="term" value="C:cytoplasm"/>
    <property type="evidence" value="ECO:0007669"/>
    <property type="project" value="UniProtKB-SubCell"/>
</dbReference>
<dbReference type="GO" id="GO:0003755">
    <property type="term" value="F:peptidyl-prolyl cis-trans isomerase activity"/>
    <property type="evidence" value="ECO:0007669"/>
    <property type="project" value="UniProtKB-UniRule"/>
</dbReference>
<dbReference type="GO" id="GO:0044183">
    <property type="term" value="F:protein folding chaperone"/>
    <property type="evidence" value="ECO:0007669"/>
    <property type="project" value="TreeGrafter"/>
</dbReference>
<dbReference type="GO" id="GO:0043022">
    <property type="term" value="F:ribosome binding"/>
    <property type="evidence" value="ECO:0007669"/>
    <property type="project" value="TreeGrafter"/>
</dbReference>
<dbReference type="GO" id="GO:0051083">
    <property type="term" value="P:'de novo' cotranslational protein folding"/>
    <property type="evidence" value="ECO:0007669"/>
    <property type="project" value="TreeGrafter"/>
</dbReference>
<dbReference type="GO" id="GO:0051301">
    <property type="term" value="P:cell division"/>
    <property type="evidence" value="ECO:0007669"/>
    <property type="project" value="UniProtKB-KW"/>
</dbReference>
<dbReference type="GO" id="GO:0061077">
    <property type="term" value="P:chaperone-mediated protein folding"/>
    <property type="evidence" value="ECO:0007669"/>
    <property type="project" value="TreeGrafter"/>
</dbReference>
<dbReference type="GO" id="GO:0015031">
    <property type="term" value="P:protein transport"/>
    <property type="evidence" value="ECO:0007669"/>
    <property type="project" value="UniProtKB-UniRule"/>
</dbReference>
<dbReference type="GO" id="GO:0043335">
    <property type="term" value="P:protein unfolding"/>
    <property type="evidence" value="ECO:0007669"/>
    <property type="project" value="TreeGrafter"/>
</dbReference>
<dbReference type="FunFam" id="3.10.50.40:FF:000001">
    <property type="entry name" value="Trigger factor"/>
    <property type="match status" value="1"/>
</dbReference>
<dbReference type="Gene3D" id="3.10.50.40">
    <property type="match status" value="1"/>
</dbReference>
<dbReference type="Gene3D" id="3.30.70.1050">
    <property type="entry name" value="Trigger factor ribosome-binding domain"/>
    <property type="match status" value="1"/>
</dbReference>
<dbReference type="Gene3D" id="1.10.3120.10">
    <property type="entry name" value="Trigger factor, C-terminal domain"/>
    <property type="match status" value="1"/>
</dbReference>
<dbReference type="HAMAP" id="MF_00303">
    <property type="entry name" value="Trigger_factor_Tig"/>
    <property type="match status" value="1"/>
</dbReference>
<dbReference type="InterPro" id="IPR046357">
    <property type="entry name" value="PPIase_dom_sf"/>
</dbReference>
<dbReference type="InterPro" id="IPR001179">
    <property type="entry name" value="PPIase_FKBP_dom"/>
</dbReference>
<dbReference type="InterPro" id="IPR005215">
    <property type="entry name" value="Trig_fac"/>
</dbReference>
<dbReference type="InterPro" id="IPR008880">
    <property type="entry name" value="Trigger_fac_C"/>
</dbReference>
<dbReference type="InterPro" id="IPR037041">
    <property type="entry name" value="Trigger_fac_C_sf"/>
</dbReference>
<dbReference type="InterPro" id="IPR008881">
    <property type="entry name" value="Trigger_fac_ribosome-bd_bac"/>
</dbReference>
<dbReference type="InterPro" id="IPR036611">
    <property type="entry name" value="Trigger_fac_ribosome-bd_sf"/>
</dbReference>
<dbReference type="InterPro" id="IPR027304">
    <property type="entry name" value="Trigger_fact/SurA_dom_sf"/>
</dbReference>
<dbReference type="NCBIfam" id="TIGR00115">
    <property type="entry name" value="tig"/>
    <property type="match status" value="1"/>
</dbReference>
<dbReference type="PANTHER" id="PTHR30560">
    <property type="entry name" value="TRIGGER FACTOR CHAPERONE AND PEPTIDYL-PROLYL CIS/TRANS ISOMERASE"/>
    <property type="match status" value="1"/>
</dbReference>
<dbReference type="PANTHER" id="PTHR30560:SF3">
    <property type="entry name" value="TRIGGER FACTOR-LIKE PROTEIN TIG, CHLOROPLASTIC"/>
    <property type="match status" value="1"/>
</dbReference>
<dbReference type="Pfam" id="PF00254">
    <property type="entry name" value="FKBP_C"/>
    <property type="match status" value="1"/>
</dbReference>
<dbReference type="Pfam" id="PF05698">
    <property type="entry name" value="Trigger_C"/>
    <property type="match status" value="1"/>
</dbReference>
<dbReference type="Pfam" id="PF05697">
    <property type="entry name" value="Trigger_N"/>
    <property type="match status" value="1"/>
</dbReference>
<dbReference type="PIRSF" id="PIRSF003095">
    <property type="entry name" value="Trigger_factor"/>
    <property type="match status" value="1"/>
</dbReference>
<dbReference type="SUPFAM" id="SSF54534">
    <property type="entry name" value="FKBP-like"/>
    <property type="match status" value="1"/>
</dbReference>
<dbReference type="SUPFAM" id="SSF109998">
    <property type="entry name" value="Triger factor/SurA peptide-binding domain-like"/>
    <property type="match status" value="1"/>
</dbReference>
<dbReference type="SUPFAM" id="SSF102735">
    <property type="entry name" value="Trigger factor ribosome-binding domain"/>
    <property type="match status" value="1"/>
</dbReference>
<dbReference type="PROSITE" id="PS50059">
    <property type="entry name" value="FKBP_PPIASE"/>
    <property type="match status" value="1"/>
</dbReference>
<evidence type="ECO:0000255" key="1">
    <source>
        <dbReference type="HAMAP-Rule" id="MF_00303"/>
    </source>
</evidence>
<evidence type="ECO:0000256" key="2">
    <source>
        <dbReference type="SAM" id="MobiDB-lite"/>
    </source>
</evidence>
<name>TIG_LACH4</name>
<feature type="chain" id="PRO_1000071987" description="Trigger factor">
    <location>
        <begin position="1"/>
        <end position="452"/>
    </location>
</feature>
<feature type="domain" description="PPIase FKBP-type" evidence="1">
    <location>
        <begin position="162"/>
        <end position="247"/>
    </location>
</feature>
<feature type="region of interest" description="Disordered" evidence="2">
    <location>
        <begin position="427"/>
        <end position="452"/>
    </location>
</feature>
<organism>
    <name type="scientific">Lactobacillus helveticus (strain DPC 4571)</name>
    <dbReference type="NCBI Taxonomy" id="405566"/>
    <lineage>
        <taxon>Bacteria</taxon>
        <taxon>Bacillati</taxon>
        <taxon>Bacillota</taxon>
        <taxon>Bacilli</taxon>
        <taxon>Lactobacillales</taxon>
        <taxon>Lactobacillaceae</taxon>
        <taxon>Lactobacillus</taxon>
    </lineage>
</organism>
<accession>A8YUS3</accession>
<sequence length="452" mass="50481">MSVKWKKTGKTTGELTFDISKDEIKLGLDQAFRRVKKNLHVPGFRKGHVSRVIFDQYYGEEALYEDALNIVLPNAYSAAVKEAGIAAVGQPQIVPVSMDKDKDWTMKATVTVEPEVKLGDYKGIEVPKQNTRVYQKDVDAELDKRREQNAELVLKKGKSAKGDTVTIDYKGTIDGKEFEGGSAENYSLELGSGAFIPGFEDQLIGHEAGDDVDVVVTFPKDYGAKDLAGKEAHFATKIHEVKSKQLPKLDDEFAKDVDDSVDTLDELKDKIKKQLKDQKEQAANDAIQEAAIEGAVKNATVDEIPDAMIQDDVDTQLNQYLGNMQRQGIDPQTYYKLTNTNEQQLRSQFAKNAAERVKTNLVLEAIVEKEGLKATKEEIDKEIKDLAAEYNMDEKTIRNTLSDDMLSHDITVRKAMDLVTDNAKQVAKAKLEAKEAEEAEDKEEAEDKKENK</sequence>
<gene>
    <name evidence="1" type="primary">tig</name>
    <name type="ordered locus">lhv_0896</name>
</gene>
<proteinExistence type="inferred from homology"/>
<keyword id="KW-0131">Cell cycle</keyword>
<keyword id="KW-0132">Cell division</keyword>
<keyword id="KW-0143">Chaperone</keyword>
<keyword id="KW-0963">Cytoplasm</keyword>
<keyword id="KW-0413">Isomerase</keyword>
<keyword id="KW-0697">Rotamase</keyword>